<organism>
    <name type="scientific">Rattus norvegicus</name>
    <name type="common">Rat</name>
    <dbReference type="NCBI Taxonomy" id="10116"/>
    <lineage>
        <taxon>Eukaryota</taxon>
        <taxon>Metazoa</taxon>
        <taxon>Chordata</taxon>
        <taxon>Craniata</taxon>
        <taxon>Vertebrata</taxon>
        <taxon>Euteleostomi</taxon>
        <taxon>Mammalia</taxon>
        <taxon>Eutheria</taxon>
        <taxon>Euarchontoglires</taxon>
        <taxon>Glires</taxon>
        <taxon>Rodentia</taxon>
        <taxon>Myomorpha</taxon>
        <taxon>Muroidea</taxon>
        <taxon>Muridae</taxon>
        <taxon>Murinae</taxon>
        <taxon>Rattus</taxon>
    </lineage>
</organism>
<accession>Q6AXN0</accession>
<sequence length="176" mass="18895">MSVNMDELKHQVMINQFVLTAGCAADQAKQLLQAAHWQFETALSAFFQETNIPYSHHHQMMCTPANTPATPPNFPDALTMFSRLKASESFHSGGSSGSPMATSATSPPPHFPHATGSFATPSWPTAASPPGGPQHLQPQPPLWTPAPPSPTSDWPPLAPQQATSEPRAHPAMEAER</sequence>
<name>UBAD1_RAT</name>
<evidence type="ECO:0000256" key="1">
    <source>
        <dbReference type="SAM" id="MobiDB-lite"/>
    </source>
</evidence>
<evidence type="ECO:0000305" key="2"/>
<dbReference type="EMBL" id="BC079459">
    <property type="protein sequence ID" value="AAH79459.1"/>
    <property type="molecule type" value="mRNA"/>
</dbReference>
<dbReference type="RefSeq" id="NP_001007669.1">
    <property type="nucleotide sequence ID" value="NM_001007668.1"/>
</dbReference>
<dbReference type="RefSeq" id="XP_003750820.1">
    <property type="nucleotide sequence ID" value="XM_003750772.4"/>
</dbReference>
<dbReference type="SMR" id="Q6AXN0"/>
<dbReference type="FunCoup" id="Q6AXN0">
    <property type="interactions" value="400"/>
</dbReference>
<dbReference type="STRING" id="10116.ENSRNOP00000033223"/>
<dbReference type="GlyGen" id="Q6AXN0">
    <property type="glycosylation" value="2 sites"/>
</dbReference>
<dbReference type="PhosphoSitePlus" id="Q6AXN0"/>
<dbReference type="PaxDb" id="10116-ENSRNOP00000033223"/>
<dbReference type="Ensembl" id="ENSRNOT00000033695.6">
    <property type="protein sequence ID" value="ENSRNOP00000033223.3"/>
    <property type="gene ID" value="ENSRNOG00000027368.6"/>
</dbReference>
<dbReference type="GeneID" id="302941"/>
<dbReference type="KEGG" id="rno:302941"/>
<dbReference type="UCSC" id="RGD:1359443">
    <property type="organism name" value="rat"/>
</dbReference>
<dbReference type="AGR" id="RGD:1359443"/>
<dbReference type="CTD" id="124402"/>
<dbReference type="RGD" id="1359443">
    <property type="gene designation" value="Ubald1"/>
</dbReference>
<dbReference type="eggNOG" id="ENOG502S0GG">
    <property type="taxonomic scope" value="Eukaryota"/>
</dbReference>
<dbReference type="GeneTree" id="ENSGT00390000008825"/>
<dbReference type="HOGENOM" id="CLU_108623_0_0_1"/>
<dbReference type="InParanoid" id="Q6AXN0"/>
<dbReference type="OMA" id="SWGMTPP"/>
<dbReference type="PhylomeDB" id="Q6AXN0"/>
<dbReference type="TreeFam" id="TF329433"/>
<dbReference type="PRO" id="PR:Q6AXN0"/>
<dbReference type="Proteomes" id="UP000002494">
    <property type="component" value="Chromosome 10"/>
</dbReference>
<dbReference type="Bgee" id="ENSRNOG00000027368">
    <property type="expression patterns" value="Expressed in frontal cortex and 19 other cell types or tissues"/>
</dbReference>
<dbReference type="CDD" id="cd14343">
    <property type="entry name" value="UBA_F100B_like"/>
    <property type="match status" value="1"/>
</dbReference>
<dbReference type="Gene3D" id="1.10.8.10">
    <property type="entry name" value="DNA helicase RuvA subunit, C-terminal domain"/>
    <property type="match status" value="1"/>
</dbReference>
<dbReference type="InterPro" id="IPR009060">
    <property type="entry name" value="UBA-like_sf"/>
</dbReference>
<dbReference type="InterPro" id="IPR054109">
    <property type="entry name" value="UBA_8"/>
</dbReference>
<dbReference type="InterPro" id="IPR039310">
    <property type="entry name" value="UBALD1/2"/>
</dbReference>
<dbReference type="PANTHER" id="PTHR31993:SF5">
    <property type="entry name" value="UBA-LIKE DOMAIN-CONTAINING PROTEIN 1"/>
    <property type="match status" value="1"/>
</dbReference>
<dbReference type="PANTHER" id="PTHR31993">
    <property type="entry name" value="UBA-LIKE DOMAIN-CONTAINING PROTEIN 2"/>
    <property type="match status" value="1"/>
</dbReference>
<dbReference type="Pfam" id="PF22566">
    <property type="entry name" value="UBA_8"/>
    <property type="match status" value="1"/>
</dbReference>
<dbReference type="SUPFAM" id="SSF46934">
    <property type="entry name" value="UBA-like"/>
    <property type="match status" value="1"/>
</dbReference>
<feature type="chain" id="PRO_0000236081" description="UBA-like domain-containing protein 1">
    <location>
        <begin position="1"/>
        <end position="176"/>
    </location>
</feature>
<feature type="region of interest" description="Disordered" evidence="1">
    <location>
        <begin position="88"/>
        <end position="176"/>
    </location>
</feature>
<feature type="compositionally biased region" description="Low complexity" evidence="1">
    <location>
        <begin position="88"/>
        <end position="105"/>
    </location>
</feature>
<feature type="compositionally biased region" description="Low complexity" evidence="1">
    <location>
        <begin position="120"/>
        <end position="137"/>
    </location>
</feature>
<feature type="compositionally biased region" description="Pro residues" evidence="1">
    <location>
        <begin position="138"/>
        <end position="150"/>
    </location>
</feature>
<feature type="compositionally biased region" description="Basic and acidic residues" evidence="1">
    <location>
        <begin position="166"/>
        <end position="176"/>
    </location>
</feature>
<reference key="1">
    <citation type="journal article" date="2004" name="Genome Res.">
        <title>The status, quality, and expansion of the NIH full-length cDNA project: the Mammalian Gene Collection (MGC).</title>
        <authorList>
            <consortium name="The MGC Project Team"/>
        </authorList>
    </citation>
    <scope>NUCLEOTIDE SEQUENCE [LARGE SCALE MRNA]</scope>
    <source>
        <tissue>Lung</tissue>
    </source>
</reference>
<comment type="similarity">
    <text evidence="2">Belongs to the UBALD family.</text>
</comment>
<gene>
    <name type="primary">Ubald1</name>
    <name type="synonym">Fam100a</name>
</gene>
<protein>
    <recommendedName>
        <fullName>UBA-like domain-containing protein 1</fullName>
    </recommendedName>
</protein>
<keyword id="KW-1185">Reference proteome</keyword>
<proteinExistence type="evidence at transcript level"/>